<dbReference type="EMBL" id="BA000054">
    <property type="protein sequence ID" value="BAE63352.1"/>
    <property type="status" value="ALT_SEQ"/>
    <property type="molecule type" value="Genomic_DNA"/>
</dbReference>
<dbReference type="SMR" id="Q2U513"/>
<dbReference type="STRING" id="510516.Q2U513"/>
<dbReference type="Proteomes" id="UP000006564">
    <property type="component" value="Chromosome 6"/>
</dbReference>
<dbReference type="GO" id="GO:0016592">
    <property type="term" value="C:mediator complex"/>
    <property type="evidence" value="ECO:0007669"/>
    <property type="project" value="InterPro"/>
</dbReference>
<dbReference type="GO" id="GO:0003712">
    <property type="term" value="F:transcription coregulator activity"/>
    <property type="evidence" value="ECO:0007669"/>
    <property type="project" value="InterPro"/>
</dbReference>
<dbReference type="GO" id="GO:0006357">
    <property type="term" value="P:regulation of transcription by RNA polymerase II"/>
    <property type="evidence" value="ECO:0007669"/>
    <property type="project" value="InterPro"/>
</dbReference>
<dbReference type="InterPro" id="IPR019035">
    <property type="entry name" value="Mediator_Med12"/>
</dbReference>
<dbReference type="PANTHER" id="PTHR46567">
    <property type="entry name" value="MEDIATOR OF RNA POLYMERASE II TRANSCRIPTION SUBUNIT 12"/>
    <property type="match status" value="1"/>
</dbReference>
<dbReference type="PANTHER" id="PTHR46567:SF1">
    <property type="entry name" value="MEDIATOR OF RNA POLYMERASE II TRANSCRIPTION SUBUNIT 12"/>
    <property type="match status" value="1"/>
</dbReference>
<dbReference type="Pfam" id="PF25326">
    <property type="entry name" value="ARM_SRB8"/>
    <property type="match status" value="1"/>
</dbReference>
<dbReference type="Pfam" id="PF09497">
    <property type="entry name" value="Med12"/>
    <property type="match status" value="1"/>
</dbReference>
<dbReference type="SMART" id="SM01281">
    <property type="entry name" value="Med12"/>
    <property type="match status" value="1"/>
</dbReference>
<organism>
    <name type="scientific">Aspergillus oryzae (strain ATCC 42149 / RIB 40)</name>
    <name type="common">Yellow koji mold</name>
    <dbReference type="NCBI Taxonomy" id="510516"/>
    <lineage>
        <taxon>Eukaryota</taxon>
        <taxon>Fungi</taxon>
        <taxon>Dikarya</taxon>
        <taxon>Ascomycota</taxon>
        <taxon>Pezizomycotina</taxon>
        <taxon>Eurotiomycetes</taxon>
        <taxon>Eurotiomycetidae</taxon>
        <taxon>Eurotiales</taxon>
        <taxon>Aspergillaceae</taxon>
        <taxon>Aspergillus</taxon>
        <taxon>Aspergillus subgen. Circumdati</taxon>
    </lineage>
</organism>
<gene>
    <name type="primary">srb8</name>
    <name type="synonym">med12</name>
    <name type="ORF">AO090020000119</name>
</gene>
<sequence length="1594" mass="175558">MIPHSSAGVQSWGHPLRAVNNGSGHVDASQAVGPPDPQFEKLPTPVPQPQPRQPAVIDLTTSGGDAQELEPPPKRLRLDLPAAPSARDASPAPGSGGELRSTPGTGGSKPPSLSWRNRPVWSFQAMLSEVPGSNVMNEEDATAVAQGGKPASPPSLPVLPWKYIPESLGSNPTTSRASSPVKEVQTIPYRIETPSVAPVLKGEKVADFSPWIGNHPEDVLNEQTAKQGHYDRTQVSQNESNTARPSLYAQLKHRSGLQMLSSVFAAALEKRQNHSLVTAPSTFKPPPRVTLTDNKREAWLRDLANPSVPLRKLSRTIPHGIRGKALLDQCLNKGIPVNRAVWLAKCVGANEIRAFKRKGTSGTLALGLEAKWVRDWTASVQQFLEGVLGACGSAQWKMKMTYAVSLTARLFFERLLDHDQYLGWFLSSLEAAPVNIVPVWLLMLGIYWDNIMRYRKRGRRLAELLLVKLRQVTQPDKGGPLQPLVDRLSLYVRRLVLEHTSSVVLPGSWENHKELISSCLNLKDNVHKTIYQNLSERNSRLQLPKNHQDTAERSPQQRVIQLFDSIRSAHDISSASTACLKTIEDKAILISKLLEWTATPFRYGLCRVYTGVRLLRKWKMSGIDVDSYILSFLADVRVTSALNMENIYHIISELVRSQTFSVGRYLQWLMAKGVTNTPQPVPSDLCLLKQLPANRLPEHVRNLRNTLLYRAGIPVMEEDSAIAELKISIAQRLPNIFGAEMDSAMPTESSQPHPTWAVKSEIGQWIRHGIAGHCRDSPRYVYLLSRSTAPANNYRKLSGVSVAVDPGASALTPDEFYSVREILETFGDLSMLADILKQATRCDDDVVLASVADTVNCHFDCFCVIGATADLFRGLVESYARLKRLGNASLDLLFSLIELGLRIPSEFNTVALLRQDLTRLENKSALAAPSPLSDSIPLALSDVDPSFQEKLNQLLSSGGGMDESTMDTVFYSLMHILENSGSPAKLSANETARYLAYLRPFQPKHFDTMLIRWICGLLKSSTPSMSRILPPLIGVGCVTIHAFVFLVKKLLQSEKVAAVIPNLAGLRVDLLQLLVPLVSGKSKYADLVTYRFHVAQQEFFMKHPQETLDIICDAVALVNSETGSNPGQPDIAGCATELLDILLTQNPEVTVQYCLQGFIGKHSTSTTVLERALDNLLGFDSLAGPPTMSEAEKVVRMTDDFSLPFCQLKLQMLFNAESGRNVGNGIVDVMFKAAVEDTRSKGSNWVGFVGLMSQDIIRQVWKHHYHYKNLEAHGHPGTAKSLETAKLYLTIIEKLAYSVPEAGVQSVAPILVEKMDLLLHRLVIMQTNFNNVTMNRHGAATTQILQSRSNFERSLAFWFSAFLRMIVIHRSAFTMPSPAPRANGLQEQSRLLISILCISLARLPDSVIRLFPAADYFPHPIPSQGYRPCPGILLQTHALDVAASLIDTFPDEARQQCARFLKEKCPPFLQYQNDSRFIYLLGPMSDAAALNSLQAASLPSPAAGGSTPTPTPSSALPGAPSNPQPTAMTPAVTSASLSEGINCVASHLRLQYRGRAMGPYPVRPWELLEDAAPIVGVNDTAVNLKYFDARRVRA</sequence>
<feature type="chain" id="PRO_0000312967" description="Mediator of RNA polymerase II transcription subunit 12">
    <location>
        <begin position="1"/>
        <end position="1594"/>
    </location>
</feature>
<feature type="region of interest" description="Disordered" evidence="2">
    <location>
        <begin position="1"/>
        <end position="116"/>
    </location>
</feature>
<feature type="region of interest" description="Disordered" evidence="2">
    <location>
        <begin position="1499"/>
        <end position="1532"/>
    </location>
</feature>
<feature type="compositionally biased region" description="Low complexity" evidence="2">
    <location>
        <begin position="81"/>
        <end position="93"/>
    </location>
</feature>
<feature type="compositionally biased region" description="Low complexity" evidence="2">
    <location>
        <begin position="1499"/>
        <end position="1521"/>
    </location>
</feature>
<name>SRB8_ASPOR</name>
<proteinExistence type="inferred from homology"/>
<keyword id="KW-0010">Activator</keyword>
<keyword id="KW-0539">Nucleus</keyword>
<keyword id="KW-1185">Reference proteome</keyword>
<keyword id="KW-0678">Repressor</keyword>
<keyword id="KW-0804">Transcription</keyword>
<keyword id="KW-0805">Transcription regulation</keyword>
<reference key="1">
    <citation type="journal article" date="2005" name="Nature">
        <title>Genome sequencing and analysis of Aspergillus oryzae.</title>
        <authorList>
            <person name="Machida M."/>
            <person name="Asai K."/>
            <person name="Sano M."/>
            <person name="Tanaka T."/>
            <person name="Kumagai T."/>
            <person name="Terai G."/>
            <person name="Kusumoto K."/>
            <person name="Arima T."/>
            <person name="Akita O."/>
            <person name="Kashiwagi Y."/>
            <person name="Abe K."/>
            <person name="Gomi K."/>
            <person name="Horiuchi H."/>
            <person name="Kitamoto K."/>
            <person name="Kobayashi T."/>
            <person name="Takeuchi M."/>
            <person name="Denning D.W."/>
            <person name="Galagan J.E."/>
            <person name="Nierman W.C."/>
            <person name="Yu J."/>
            <person name="Archer D.B."/>
            <person name="Bennett J.W."/>
            <person name="Bhatnagar D."/>
            <person name="Cleveland T.E."/>
            <person name="Fedorova N.D."/>
            <person name="Gotoh O."/>
            <person name="Horikawa H."/>
            <person name="Hosoyama A."/>
            <person name="Ichinomiya M."/>
            <person name="Igarashi R."/>
            <person name="Iwashita K."/>
            <person name="Juvvadi P.R."/>
            <person name="Kato M."/>
            <person name="Kato Y."/>
            <person name="Kin T."/>
            <person name="Kokubun A."/>
            <person name="Maeda H."/>
            <person name="Maeyama N."/>
            <person name="Maruyama J."/>
            <person name="Nagasaki H."/>
            <person name="Nakajima T."/>
            <person name="Oda K."/>
            <person name="Okada K."/>
            <person name="Paulsen I."/>
            <person name="Sakamoto K."/>
            <person name="Sawano T."/>
            <person name="Takahashi M."/>
            <person name="Takase K."/>
            <person name="Terabayashi Y."/>
            <person name="Wortman J.R."/>
            <person name="Yamada O."/>
            <person name="Yamagata Y."/>
            <person name="Anazawa H."/>
            <person name="Hata Y."/>
            <person name="Koide Y."/>
            <person name="Komori T."/>
            <person name="Koyama Y."/>
            <person name="Minetoki T."/>
            <person name="Suharnan S."/>
            <person name="Tanaka A."/>
            <person name="Isono K."/>
            <person name="Kuhara S."/>
            <person name="Ogasawara N."/>
            <person name="Kikuchi H."/>
        </authorList>
    </citation>
    <scope>NUCLEOTIDE SEQUENCE [LARGE SCALE GENOMIC DNA]</scope>
    <source>
        <strain>ATCC 42149 / RIB 40</strain>
    </source>
</reference>
<evidence type="ECO:0000250" key="1"/>
<evidence type="ECO:0000256" key="2">
    <source>
        <dbReference type="SAM" id="MobiDB-lite"/>
    </source>
</evidence>
<evidence type="ECO:0000305" key="3"/>
<accession>Q2U513</accession>
<protein>
    <recommendedName>
        <fullName>Mediator of RNA polymerase II transcription subunit 12</fullName>
    </recommendedName>
    <alternativeName>
        <fullName>Mediator complex subunit 12</fullName>
    </alternativeName>
</protein>
<comment type="function">
    <text evidence="1">Component of the srb8-11 complex. The srb8-11 complex is a regulatory module of the Mediator complex which is itself involved in regulation of basal and activated RNA polymerase II-dependent transcription. The srb8-11 complex may be involved in the transcriptional repression of a subset of genes regulated by Mediator. It may inhibit the association of the Mediator complex with RNA polymerase II to form the holoenzyme complex (By similarity).</text>
</comment>
<comment type="subunit">
    <text evidence="1">Component of the srb8-11 complex, which itself associates with the Mediator complex.</text>
</comment>
<comment type="subcellular location">
    <subcellularLocation>
        <location evidence="3">Nucleus</location>
    </subcellularLocation>
</comment>
<comment type="similarity">
    <text evidence="3">Belongs to the Mediator complex subunit 12 family.</text>
</comment>
<comment type="sequence caution" evidence="3">
    <conflict type="erroneous gene model prediction">
        <sequence resource="EMBL-CDS" id="BAE63352"/>
    </conflict>
</comment>